<evidence type="ECO:0000250" key="1"/>
<evidence type="ECO:0000269" key="2">
    <source>
    </source>
</evidence>
<evidence type="ECO:0000303" key="3">
    <source>
    </source>
</evidence>
<evidence type="ECO:0000305" key="4"/>
<evidence type="ECO:0007744" key="5">
    <source>
    </source>
</evidence>
<comment type="catalytic activity">
    <reaction>
        <text>L-histidinol phosphate + 2-oxoglutarate = 3-(imidazol-4-yl)-2-oxopropyl phosphate + L-glutamate</text>
        <dbReference type="Rhea" id="RHEA:23744"/>
        <dbReference type="ChEBI" id="CHEBI:16810"/>
        <dbReference type="ChEBI" id="CHEBI:29985"/>
        <dbReference type="ChEBI" id="CHEBI:57766"/>
        <dbReference type="ChEBI" id="CHEBI:57980"/>
        <dbReference type="EC" id="2.6.1.9"/>
    </reaction>
</comment>
<comment type="cofactor">
    <cofactor evidence="1">
        <name>pyridoxal 5'-phosphate</name>
        <dbReference type="ChEBI" id="CHEBI:597326"/>
    </cofactor>
</comment>
<comment type="pathway">
    <text>Amino-acid biosynthesis; L-histidine biosynthesis; L-histidine from 5-phospho-alpha-D-ribose 1-diphosphate: step 7/9.</text>
</comment>
<comment type="subunit">
    <text evidence="1">Homodimer.</text>
</comment>
<comment type="subcellular location">
    <subcellularLocation>
        <location evidence="4">Plastid</location>
        <location evidence="4">Chloroplast</location>
    </subcellularLocation>
</comment>
<comment type="alternative products">
    <event type="alternative splicing"/>
    <isoform>
        <id>B9DHD3-1</id>
        <name>1</name>
        <sequence type="displayed"/>
    </isoform>
    <isoform>
        <id>B9DHD3-2</id>
        <name>2</name>
        <sequence type="described" ref="VSP_036337"/>
    </isoform>
</comment>
<comment type="tissue specificity">
    <text evidence="2">Expressed in both vegetative and reproductive tissues.</text>
</comment>
<comment type="similarity">
    <text evidence="4">Belongs to the class-II pyridoxal-phosphate-dependent aminotransferase family. Histidinol-phosphate aminotransferase subfamily.</text>
</comment>
<comment type="sequence caution" evidence="4">
    <conflict type="erroneous gene model prediction">
        <sequence resource="EMBL-CDS" id="CAB96689"/>
    </conflict>
</comment>
<gene>
    <name type="primary">HISN6A</name>
    <name type="synonym">EMB2196</name>
    <name type="synonym">GD1-B</name>
    <name type="synonym">HPA1</name>
    <name type="ordered locus">At5g10330</name>
    <name type="ORF">F18D22.100</name>
</gene>
<keyword id="KW-0007">Acetylation</keyword>
<keyword id="KW-0025">Alternative splicing</keyword>
<keyword id="KW-0028">Amino-acid biosynthesis</keyword>
<keyword id="KW-0032">Aminotransferase</keyword>
<keyword id="KW-0150">Chloroplast</keyword>
<keyword id="KW-0368">Histidine biosynthesis</keyword>
<keyword id="KW-0934">Plastid</keyword>
<keyword id="KW-0663">Pyridoxal phosphate</keyword>
<keyword id="KW-1185">Reference proteome</keyword>
<keyword id="KW-0808">Transferase</keyword>
<keyword id="KW-0809">Transit peptide</keyword>
<name>HIS6A_ARATH</name>
<dbReference type="EC" id="2.6.1.9"/>
<dbReference type="EMBL" id="AL360334">
    <property type="protein sequence ID" value="CAB96689.1"/>
    <property type="status" value="ALT_SEQ"/>
    <property type="molecule type" value="Genomic_DNA"/>
</dbReference>
<dbReference type="EMBL" id="CP002688">
    <property type="protein sequence ID" value="AED91523.1"/>
    <property type="molecule type" value="Genomic_DNA"/>
</dbReference>
<dbReference type="EMBL" id="CP002688">
    <property type="protein sequence ID" value="AED91524.1"/>
    <property type="molecule type" value="Genomic_DNA"/>
</dbReference>
<dbReference type="EMBL" id="CP002688">
    <property type="protein sequence ID" value="ANM69216.1"/>
    <property type="molecule type" value="Genomic_DNA"/>
</dbReference>
<dbReference type="EMBL" id="CP002688">
    <property type="protein sequence ID" value="ANM69217.1"/>
    <property type="molecule type" value="Genomic_DNA"/>
</dbReference>
<dbReference type="EMBL" id="CP002688">
    <property type="protein sequence ID" value="ANM69218.1"/>
    <property type="molecule type" value="Genomic_DNA"/>
</dbReference>
<dbReference type="EMBL" id="CP002688">
    <property type="protein sequence ID" value="ANM69219.1"/>
    <property type="molecule type" value="Genomic_DNA"/>
</dbReference>
<dbReference type="EMBL" id="AY050832">
    <property type="protein sequence ID" value="AAK92767.1"/>
    <property type="molecule type" value="mRNA"/>
</dbReference>
<dbReference type="EMBL" id="AY117255">
    <property type="protein sequence ID" value="AAM51330.1"/>
    <property type="molecule type" value="mRNA"/>
</dbReference>
<dbReference type="EMBL" id="BX831512">
    <property type="status" value="NOT_ANNOTATED_CDS"/>
    <property type="molecule type" value="mRNA"/>
</dbReference>
<dbReference type="EMBL" id="AK317485">
    <property type="protein sequence ID" value="BAH20150.1"/>
    <property type="molecule type" value="mRNA"/>
</dbReference>
<dbReference type="EMBL" id="AY470015">
    <property type="protein sequence ID" value="AAR85399.1"/>
    <property type="molecule type" value="Genomic_DNA"/>
</dbReference>
<dbReference type="EMBL" id="AY470016">
    <property type="protein sequence ID" value="AAR85400.1"/>
    <property type="molecule type" value="Genomic_DNA"/>
</dbReference>
<dbReference type="EMBL" id="AY470017">
    <property type="protein sequence ID" value="AAR85401.1"/>
    <property type="molecule type" value="Genomic_DNA"/>
</dbReference>
<dbReference type="EMBL" id="AY470018">
    <property type="protein sequence ID" value="AAR85402.1"/>
    <property type="molecule type" value="Genomic_DNA"/>
</dbReference>
<dbReference type="EMBL" id="AY470019">
    <property type="protein sequence ID" value="AAR85403.1"/>
    <property type="molecule type" value="Genomic_DNA"/>
</dbReference>
<dbReference type="EMBL" id="AY470020">
    <property type="protein sequence ID" value="AAR85404.1"/>
    <property type="molecule type" value="Genomic_DNA"/>
</dbReference>
<dbReference type="EMBL" id="AY470021">
    <property type="protein sequence ID" value="AAR85405.1"/>
    <property type="molecule type" value="Genomic_DNA"/>
</dbReference>
<dbReference type="EMBL" id="AY470022">
    <property type="protein sequence ID" value="AAR85406.1"/>
    <property type="molecule type" value="Genomic_DNA"/>
</dbReference>
<dbReference type="EMBL" id="AY470023">
    <property type="protein sequence ID" value="AAR85407.1"/>
    <property type="molecule type" value="Genomic_DNA"/>
</dbReference>
<dbReference type="EMBL" id="AY470024">
    <property type="protein sequence ID" value="AAR85408.1"/>
    <property type="molecule type" value="Genomic_DNA"/>
</dbReference>
<dbReference type="EMBL" id="AY470025">
    <property type="protein sequence ID" value="AAR85409.1"/>
    <property type="molecule type" value="Genomic_DNA"/>
</dbReference>
<dbReference type="EMBL" id="AY470026">
    <property type="protein sequence ID" value="AAR85410.1"/>
    <property type="molecule type" value="Genomic_DNA"/>
</dbReference>
<dbReference type="EMBL" id="AY470027">
    <property type="protein sequence ID" value="AAR85411.1"/>
    <property type="molecule type" value="Genomic_DNA"/>
</dbReference>
<dbReference type="EMBL" id="AY470028">
    <property type="protein sequence ID" value="AAR85412.1"/>
    <property type="molecule type" value="Genomic_DNA"/>
</dbReference>
<dbReference type="EMBL" id="AY470029">
    <property type="protein sequence ID" value="AAR85413.1"/>
    <property type="molecule type" value="Genomic_DNA"/>
</dbReference>
<dbReference type="PIR" id="T50821">
    <property type="entry name" value="T50821"/>
</dbReference>
<dbReference type="RefSeq" id="NP_001031867.1">
    <molecule id="B9DHD3-1"/>
    <property type="nucleotide sequence ID" value="NM_001036790.2"/>
</dbReference>
<dbReference type="RefSeq" id="NP_001117584.1">
    <molecule id="B9DHD3-1"/>
    <property type="nucleotide sequence ID" value="NM_001124112.2"/>
</dbReference>
<dbReference type="RefSeq" id="NP_001319364.1">
    <molecule id="B9DHD3-1"/>
    <property type="nucleotide sequence ID" value="NM_001334509.1"/>
</dbReference>
<dbReference type="RefSeq" id="NP_001321653.1">
    <molecule id="B9DHD3-2"/>
    <property type="nucleotide sequence ID" value="NM_001334511.1"/>
</dbReference>
<dbReference type="RefSeq" id="NP_001321654.1">
    <molecule id="B9DHD3-2"/>
    <property type="nucleotide sequence ID" value="NM_001334510.1"/>
</dbReference>
<dbReference type="RefSeq" id="NP_001330915.1">
    <molecule id="B9DHD3-2"/>
    <property type="nucleotide sequence ID" value="NM_001343108.1"/>
</dbReference>
<dbReference type="RefSeq" id="NP_001330916.1">
    <molecule id="B9DHD3-2"/>
    <property type="nucleotide sequence ID" value="NM_001343107.1"/>
</dbReference>
<dbReference type="RefSeq" id="NP_001330917.1">
    <molecule id="B9DHD3-2"/>
    <property type="nucleotide sequence ID" value="NM_001343106.1"/>
</dbReference>
<dbReference type="RefSeq" id="NP_001330918.1">
    <molecule id="B9DHD3-2"/>
    <property type="nucleotide sequence ID" value="NM_001343105.1"/>
</dbReference>
<dbReference type="RefSeq" id="NP_568226.1">
    <molecule id="B9DHD3-1"/>
    <property type="nucleotide sequence ID" value="NM_121071.4"/>
</dbReference>
<dbReference type="SMR" id="B9DHD3"/>
<dbReference type="BioGRID" id="16175">
    <property type="interactions" value="2"/>
</dbReference>
<dbReference type="BioGRID" id="28743">
    <property type="interactions" value="2"/>
</dbReference>
<dbReference type="FunCoup" id="B9DHD3">
    <property type="interactions" value="518"/>
</dbReference>
<dbReference type="STRING" id="3702.B9DHD3"/>
<dbReference type="iPTMnet" id="B9DHD3"/>
<dbReference type="PaxDb" id="3702-AT1G71920.2"/>
<dbReference type="EnsemblPlants" id="AT1G71920.2">
    <property type="protein sequence ID" value="AT1G71920.2"/>
    <property type="gene ID" value="AT1G71920"/>
</dbReference>
<dbReference type="EnsemblPlants" id="AT1G71920.4">
    <molecule id="B9DHD3-2"/>
    <property type="protein sequence ID" value="AT1G71920.4"/>
    <property type="gene ID" value="AT1G71920"/>
</dbReference>
<dbReference type="EnsemblPlants" id="AT1G71920.5">
    <molecule id="B9DHD3-2"/>
    <property type="protein sequence ID" value="AT1G71920.5"/>
    <property type="gene ID" value="AT1G71920"/>
</dbReference>
<dbReference type="EnsemblPlants" id="AT1G71920.6">
    <property type="protein sequence ID" value="AT1G71920.6"/>
    <property type="gene ID" value="AT1G71920"/>
</dbReference>
<dbReference type="EnsemblPlants" id="AT5G10330.1">
    <property type="protein sequence ID" value="AT5G10330.1"/>
    <property type="gene ID" value="AT5G10330"/>
</dbReference>
<dbReference type="EnsemblPlants" id="AT5G10330.2">
    <property type="protein sequence ID" value="AT5G10330.2"/>
    <property type="gene ID" value="AT5G10330"/>
</dbReference>
<dbReference type="EnsemblPlants" id="AT5G10330.4">
    <molecule id="B9DHD3-2"/>
    <property type="protein sequence ID" value="AT5G10330.4"/>
    <property type="gene ID" value="AT5G10330"/>
</dbReference>
<dbReference type="EnsemblPlants" id="AT5G10330.5">
    <molecule id="B9DHD3-2"/>
    <property type="protein sequence ID" value="AT5G10330.5"/>
    <property type="gene ID" value="AT5G10330"/>
</dbReference>
<dbReference type="EnsemblPlants" id="AT5G10330.6">
    <molecule id="B9DHD3-2"/>
    <property type="protein sequence ID" value="AT5G10330.6"/>
    <property type="gene ID" value="AT5G10330"/>
</dbReference>
<dbReference type="EnsemblPlants" id="AT5G10330.7">
    <molecule id="B9DHD3-2"/>
    <property type="protein sequence ID" value="AT5G10330.7"/>
    <property type="gene ID" value="AT5G10330"/>
</dbReference>
<dbReference type="GeneID" id="830897"/>
<dbReference type="Gramene" id="AT1G71920.2">
    <property type="protein sequence ID" value="AT1G71920.2"/>
    <property type="gene ID" value="AT1G71920"/>
</dbReference>
<dbReference type="Gramene" id="AT1G71920.4">
    <molecule id="B9DHD3-2"/>
    <property type="protein sequence ID" value="AT1G71920.4"/>
    <property type="gene ID" value="AT1G71920"/>
</dbReference>
<dbReference type="Gramene" id="AT1G71920.5">
    <molecule id="B9DHD3-2"/>
    <property type="protein sequence ID" value="AT1G71920.5"/>
    <property type="gene ID" value="AT1G71920"/>
</dbReference>
<dbReference type="Gramene" id="AT1G71920.6">
    <property type="protein sequence ID" value="AT1G71920.6"/>
    <property type="gene ID" value="AT1G71920"/>
</dbReference>
<dbReference type="Gramene" id="AT5G10330.1">
    <property type="protein sequence ID" value="AT5G10330.1"/>
    <property type="gene ID" value="AT5G10330"/>
</dbReference>
<dbReference type="Gramene" id="AT5G10330.2">
    <property type="protein sequence ID" value="AT5G10330.2"/>
    <property type="gene ID" value="AT5G10330"/>
</dbReference>
<dbReference type="Gramene" id="AT5G10330.4">
    <molecule id="B9DHD3-2"/>
    <property type="protein sequence ID" value="AT5G10330.4"/>
    <property type="gene ID" value="AT5G10330"/>
</dbReference>
<dbReference type="Gramene" id="AT5G10330.5">
    <molecule id="B9DHD3-2"/>
    <property type="protein sequence ID" value="AT5G10330.5"/>
    <property type="gene ID" value="AT5G10330"/>
</dbReference>
<dbReference type="Gramene" id="AT5G10330.6">
    <molecule id="B9DHD3-2"/>
    <property type="protein sequence ID" value="AT5G10330.6"/>
    <property type="gene ID" value="AT5G10330"/>
</dbReference>
<dbReference type="Gramene" id="AT5G10330.7">
    <molecule id="B9DHD3-2"/>
    <property type="protein sequence ID" value="AT5G10330.7"/>
    <property type="gene ID" value="AT5G10330"/>
</dbReference>
<dbReference type="KEGG" id="ath:AT1G71920"/>
<dbReference type="KEGG" id="ath:AT5G10330"/>
<dbReference type="Araport" id="AT5G10330"/>
<dbReference type="TAIR" id="AT5G10330">
    <property type="gene designation" value="HPA1"/>
</dbReference>
<dbReference type="eggNOG" id="KOG0633">
    <property type="taxonomic scope" value="Eukaryota"/>
</dbReference>
<dbReference type="InParanoid" id="B9DHD3"/>
<dbReference type="OMA" id="NFVQFGR"/>
<dbReference type="OrthoDB" id="2015537at2759"/>
<dbReference type="PhylomeDB" id="B9DHD3"/>
<dbReference type="UniPathway" id="UPA00031">
    <property type="reaction ID" value="UER00012"/>
</dbReference>
<dbReference type="PRO" id="PR:B9DHD3"/>
<dbReference type="Proteomes" id="UP000006548">
    <property type="component" value="Chromosome 5"/>
</dbReference>
<dbReference type="ExpressionAtlas" id="B9DHD3">
    <property type="expression patterns" value="baseline and differential"/>
</dbReference>
<dbReference type="GO" id="GO:0009507">
    <property type="term" value="C:chloroplast"/>
    <property type="evidence" value="ECO:0007669"/>
    <property type="project" value="UniProtKB-SubCell"/>
</dbReference>
<dbReference type="GO" id="GO:0004400">
    <property type="term" value="F:histidinol-phosphate transaminase activity"/>
    <property type="evidence" value="ECO:0007669"/>
    <property type="project" value="UniProtKB-EC"/>
</dbReference>
<dbReference type="GO" id="GO:0030170">
    <property type="term" value="F:pyridoxal phosphate binding"/>
    <property type="evidence" value="ECO:0007669"/>
    <property type="project" value="InterPro"/>
</dbReference>
<dbReference type="GO" id="GO:0000105">
    <property type="term" value="P:L-histidine biosynthetic process"/>
    <property type="evidence" value="ECO:0000304"/>
    <property type="project" value="TAIR"/>
</dbReference>
<dbReference type="CDD" id="cd00609">
    <property type="entry name" value="AAT_like"/>
    <property type="match status" value="1"/>
</dbReference>
<dbReference type="FunFam" id="3.40.640.10:FF:000131">
    <property type="entry name" value="HISTIDINE BIOSYNTHESIS 6B"/>
    <property type="match status" value="1"/>
</dbReference>
<dbReference type="Gene3D" id="3.90.1150.10">
    <property type="entry name" value="Aspartate Aminotransferase, domain 1"/>
    <property type="match status" value="1"/>
</dbReference>
<dbReference type="Gene3D" id="3.40.640.10">
    <property type="entry name" value="Type I PLP-dependent aspartate aminotransferase-like (Major domain)"/>
    <property type="match status" value="1"/>
</dbReference>
<dbReference type="HAMAP" id="MF_01023">
    <property type="entry name" value="HisC_aminotrans_2"/>
    <property type="match status" value="1"/>
</dbReference>
<dbReference type="InterPro" id="IPR004839">
    <property type="entry name" value="Aminotransferase_I/II_large"/>
</dbReference>
<dbReference type="InterPro" id="IPR005861">
    <property type="entry name" value="HisP_aminotrans"/>
</dbReference>
<dbReference type="InterPro" id="IPR015424">
    <property type="entry name" value="PyrdxlP-dep_Trfase"/>
</dbReference>
<dbReference type="InterPro" id="IPR015421">
    <property type="entry name" value="PyrdxlP-dep_Trfase_major"/>
</dbReference>
<dbReference type="InterPro" id="IPR015422">
    <property type="entry name" value="PyrdxlP-dep_Trfase_small"/>
</dbReference>
<dbReference type="NCBIfam" id="TIGR01141">
    <property type="entry name" value="hisC"/>
    <property type="match status" value="1"/>
</dbReference>
<dbReference type="PANTHER" id="PTHR42885:SF2">
    <property type="entry name" value="HISTIDINOL-PHOSPHATE AMINOTRANSFERASE"/>
    <property type="match status" value="1"/>
</dbReference>
<dbReference type="PANTHER" id="PTHR42885">
    <property type="entry name" value="HISTIDINOL-PHOSPHATE AMINOTRANSFERASE-RELATED"/>
    <property type="match status" value="1"/>
</dbReference>
<dbReference type="Pfam" id="PF00155">
    <property type="entry name" value="Aminotran_1_2"/>
    <property type="match status" value="1"/>
</dbReference>
<dbReference type="SUPFAM" id="SSF53383">
    <property type="entry name" value="PLP-dependent transferases"/>
    <property type="match status" value="1"/>
</dbReference>
<protein>
    <recommendedName>
        <fullName>Histidinol-phosphate aminotransferase 1, chloroplastic</fullName>
        <ecNumber>2.6.1.9</ecNumber>
    </recommendedName>
    <alternativeName>
        <fullName>Gene duplicate 1-B protein</fullName>
    </alternativeName>
    <alternativeName>
        <fullName>Imidazole acetol-phosphate transaminase</fullName>
    </alternativeName>
    <alternativeName>
        <fullName>Protein EMBRYO DEFECTIVE 2196</fullName>
    </alternativeName>
    <alternativeName>
        <fullName>Protein HISTIDINE BIOSYNTHESIS 6A</fullName>
    </alternativeName>
</protein>
<accession>B9DHD3</accession>
<accession>Q6S4C1</accession>
<accession>Q6S4D6</accession>
<accession>Q949X3</accession>
<accession>Q9LD56</accession>
<feature type="transit peptide" description="Chloroplast" evidence="5">
    <location>
        <begin position="1"/>
        <end position="40"/>
    </location>
</feature>
<feature type="chain" id="PRO_0000013447" description="Histidinol-phosphate aminotransferase 1, chloroplastic">
    <location>
        <begin position="41"/>
        <end position="417"/>
    </location>
</feature>
<feature type="modified residue" description="N-acetylalanine" evidence="5">
    <location>
        <position position="41"/>
    </location>
</feature>
<feature type="modified residue" description="N6-(pyridoxal phosphate)lysine" evidence="1">
    <location>
        <position position="277"/>
    </location>
</feature>
<feature type="splice variant" id="VSP_036337" description="In isoform 2." evidence="3">
    <location>
        <begin position="1"/>
        <end position="113"/>
    </location>
</feature>
<feature type="sequence conflict" description="In Ref. 3; BX831512." evidence="4" ref="3">
    <original>K</original>
    <variation>R</variation>
    <location>
        <position position="115"/>
    </location>
</feature>
<feature type="sequence conflict" description="In Ref. 3; BX831512." evidence="4" ref="3">
    <original>A</original>
    <variation>E</variation>
    <location>
        <position position="319"/>
    </location>
</feature>
<proteinExistence type="evidence at protein level"/>
<organism>
    <name type="scientific">Arabidopsis thaliana</name>
    <name type="common">Mouse-ear cress</name>
    <dbReference type="NCBI Taxonomy" id="3702"/>
    <lineage>
        <taxon>Eukaryota</taxon>
        <taxon>Viridiplantae</taxon>
        <taxon>Streptophyta</taxon>
        <taxon>Embryophyta</taxon>
        <taxon>Tracheophyta</taxon>
        <taxon>Spermatophyta</taxon>
        <taxon>Magnoliopsida</taxon>
        <taxon>eudicotyledons</taxon>
        <taxon>Gunneridae</taxon>
        <taxon>Pentapetalae</taxon>
        <taxon>rosids</taxon>
        <taxon>malvids</taxon>
        <taxon>Brassicales</taxon>
        <taxon>Brassicaceae</taxon>
        <taxon>Camelineae</taxon>
        <taxon>Arabidopsis</taxon>
    </lineage>
</organism>
<sequence length="417" mass="46635">MGVINVQGSPSFSIHSSESNLRKSRALKKPFCSIRNRVYCAQSSSAAVDESKNITMGDSFIRPHLRQLAAYQPILPFEVLSAQLGRKPEDIVKLDANENPYGPPPEVFEALGNMKFPYVYPDPQSRRLRDALAQDSGLESEYILVGCGADELIDLIMRCVLDPGEKIIDCPPTFSMYVFDAAVNGAGVIKVPRNPDFSLNVDRIAEVVELEKPKCIFLTSPNNPDGSIISEDDLLKILEMPILVVLDEAYIEFSGVESRMKWVKKYENLIVLRTFSKRAGLAGLRVGYGAFPLSIIEYLWRAKQPYNVSVAGEVAALAALSNGKYLEDVRDALVRERERLFGLLKEVPFLNPYPSYSNFILCEVTSGMDAKKLKEDLAKMGVMVRHYNSQELKGYVRVSAGKPEHTDVLMECLKQFY</sequence>
<reference key="1">
    <citation type="journal article" date="2000" name="Nature">
        <title>Sequence and analysis of chromosome 5 of the plant Arabidopsis thaliana.</title>
        <authorList>
            <person name="Tabata S."/>
            <person name="Kaneko T."/>
            <person name="Nakamura Y."/>
            <person name="Kotani H."/>
            <person name="Kato T."/>
            <person name="Asamizu E."/>
            <person name="Miyajima N."/>
            <person name="Sasamoto S."/>
            <person name="Kimura T."/>
            <person name="Hosouchi T."/>
            <person name="Kawashima K."/>
            <person name="Kohara M."/>
            <person name="Matsumoto M."/>
            <person name="Matsuno A."/>
            <person name="Muraki A."/>
            <person name="Nakayama S."/>
            <person name="Nakazaki N."/>
            <person name="Naruo K."/>
            <person name="Okumura S."/>
            <person name="Shinpo S."/>
            <person name="Takeuchi C."/>
            <person name="Wada T."/>
            <person name="Watanabe A."/>
            <person name="Yamada M."/>
            <person name="Yasuda M."/>
            <person name="Sato S."/>
            <person name="de la Bastide M."/>
            <person name="Huang E."/>
            <person name="Spiegel L."/>
            <person name="Gnoj L."/>
            <person name="O'Shaughnessy A."/>
            <person name="Preston R."/>
            <person name="Habermann K."/>
            <person name="Murray J."/>
            <person name="Johnson D."/>
            <person name="Rohlfing T."/>
            <person name="Nelson J."/>
            <person name="Stoneking T."/>
            <person name="Pepin K."/>
            <person name="Spieth J."/>
            <person name="Sekhon M."/>
            <person name="Armstrong J."/>
            <person name="Becker M."/>
            <person name="Belter E."/>
            <person name="Cordum H."/>
            <person name="Cordes M."/>
            <person name="Courtney L."/>
            <person name="Courtney W."/>
            <person name="Dante M."/>
            <person name="Du H."/>
            <person name="Edwards J."/>
            <person name="Fryman J."/>
            <person name="Haakensen B."/>
            <person name="Lamar E."/>
            <person name="Latreille P."/>
            <person name="Leonard S."/>
            <person name="Meyer R."/>
            <person name="Mulvaney E."/>
            <person name="Ozersky P."/>
            <person name="Riley A."/>
            <person name="Strowmatt C."/>
            <person name="Wagner-McPherson C."/>
            <person name="Wollam A."/>
            <person name="Yoakum M."/>
            <person name="Bell M."/>
            <person name="Dedhia N."/>
            <person name="Parnell L."/>
            <person name="Shah R."/>
            <person name="Rodriguez M."/>
            <person name="Hoon See L."/>
            <person name="Vil D."/>
            <person name="Baker J."/>
            <person name="Kirchoff K."/>
            <person name="Toth K."/>
            <person name="King L."/>
            <person name="Bahret A."/>
            <person name="Miller B."/>
            <person name="Marra M.A."/>
            <person name="Martienssen R."/>
            <person name="McCombie W.R."/>
            <person name="Wilson R.K."/>
            <person name="Murphy G."/>
            <person name="Bancroft I."/>
            <person name="Volckaert G."/>
            <person name="Wambutt R."/>
            <person name="Duesterhoeft A."/>
            <person name="Stiekema W."/>
            <person name="Pohl T."/>
            <person name="Entian K.-D."/>
            <person name="Terryn N."/>
            <person name="Hartley N."/>
            <person name="Bent E."/>
            <person name="Johnson S."/>
            <person name="Langham S.-A."/>
            <person name="McCullagh B."/>
            <person name="Robben J."/>
            <person name="Grymonprez B."/>
            <person name="Zimmermann W."/>
            <person name="Ramsperger U."/>
            <person name="Wedler H."/>
            <person name="Balke K."/>
            <person name="Wedler E."/>
            <person name="Peters S."/>
            <person name="van Staveren M."/>
            <person name="Dirkse W."/>
            <person name="Mooijman P."/>
            <person name="Klein Lankhorst R."/>
            <person name="Weitzenegger T."/>
            <person name="Bothe G."/>
            <person name="Rose M."/>
            <person name="Hauf J."/>
            <person name="Berneiser S."/>
            <person name="Hempel S."/>
            <person name="Feldpausch M."/>
            <person name="Lamberth S."/>
            <person name="Villarroel R."/>
            <person name="Gielen J."/>
            <person name="Ardiles W."/>
            <person name="Bents O."/>
            <person name="Lemcke K."/>
            <person name="Kolesov G."/>
            <person name="Mayer K.F.X."/>
            <person name="Rudd S."/>
            <person name="Schoof H."/>
            <person name="Schueller C."/>
            <person name="Zaccaria P."/>
            <person name="Mewes H.-W."/>
            <person name="Bevan M."/>
            <person name="Fransz P.F."/>
        </authorList>
    </citation>
    <scope>NUCLEOTIDE SEQUENCE [LARGE SCALE GENOMIC DNA]</scope>
    <source>
        <strain>cv. Columbia</strain>
    </source>
</reference>
<reference key="2">
    <citation type="journal article" date="2017" name="Plant J.">
        <title>Araport11: a complete reannotation of the Arabidopsis thaliana reference genome.</title>
        <authorList>
            <person name="Cheng C.Y."/>
            <person name="Krishnakumar V."/>
            <person name="Chan A.P."/>
            <person name="Thibaud-Nissen F."/>
            <person name="Schobel S."/>
            <person name="Town C.D."/>
        </authorList>
    </citation>
    <scope>GENOME REANNOTATION</scope>
    <source>
        <strain>cv. Columbia</strain>
    </source>
</reference>
<reference key="3">
    <citation type="journal article" date="2003" name="Science">
        <title>Empirical analysis of transcriptional activity in the Arabidopsis genome.</title>
        <authorList>
            <person name="Yamada K."/>
            <person name="Lim J."/>
            <person name="Dale J.M."/>
            <person name="Chen H."/>
            <person name="Shinn P."/>
            <person name="Palm C.J."/>
            <person name="Southwick A.M."/>
            <person name="Wu H.C."/>
            <person name="Kim C.J."/>
            <person name="Nguyen M."/>
            <person name="Pham P.K."/>
            <person name="Cheuk R.F."/>
            <person name="Karlin-Newmann G."/>
            <person name="Liu S.X."/>
            <person name="Lam B."/>
            <person name="Sakano H."/>
            <person name="Wu T."/>
            <person name="Yu G."/>
            <person name="Miranda M."/>
            <person name="Quach H.L."/>
            <person name="Tripp M."/>
            <person name="Chang C.H."/>
            <person name="Lee J.M."/>
            <person name="Toriumi M.J."/>
            <person name="Chan M.M."/>
            <person name="Tang C.C."/>
            <person name="Onodera C.S."/>
            <person name="Deng J.M."/>
            <person name="Akiyama K."/>
            <person name="Ansari Y."/>
            <person name="Arakawa T."/>
            <person name="Banh J."/>
            <person name="Banno F."/>
            <person name="Bowser L."/>
            <person name="Brooks S.Y."/>
            <person name="Carninci P."/>
            <person name="Chao Q."/>
            <person name="Choy N."/>
            <person name="Enju A."/>
            <person name="Goldsmith A.D."/>
            <person name="Gurjal M."/>
            <person name="Hansen N.F."/>
            <person name="Hayashizaki Y."/>
            <person name="Johnson-Hopson C."/>
            <person name="Hsuan V.W."/>
            <person name="Iida K."/>
            <person name="Karnes M."/>
            <person name="Khan S."/>
            <person name="Koesema E."/>
            <person name="Ishida J."/>
            <person name="Jiang P.X."/>
            <person name="Jones T."/>
            <person name="Kawai J."/>
            <person name="Kamiya A."/>
            <person name="Meyers C."/>
            <person name="Nakajima M."/>
            <person name="Narusaka M."/>
            <person name="Seki M."/>
            <person name="Sakurai T."/>
            <person name="Satou M."/>
            <person name="Tamse R."/>
            <person name="Vaysberg M."/>
            <person name="Wallender E.K."/>
            <person name="Wong C."/>
            <person name="Yamamura Y."/>
            <person name="Yuan S."/>
            <person name="Shinozaki K."/>
            <person name="Davis R.W."/>
            <person name="Theologis A."/>
            <person name="Ecker J.R."/>
        </authorList>
    </citation>
    <scope>NUCLEOTIDE SEQUENCE [LARGE SCALE MRNA] (ISOFORM 1)</scope>
    <source>
        <strain>cv. Columbia</strain>
    </source>
</reference>
<reference key="4">
    <citation type="journal article" date="2004" name="Genome Res.">
        <title>Whole genome sequence comparisons and 'full-length' cDNA sequences: a combined approach to evaluate and improve Arabidopsis genome annotation.</title>
        <authorList>
            <person name="Castelli V."/>
            <person name="Aury J.-M."/>
            <person name="Jaillon O."/>
            <person name="Wincker P."/>
            <person name="Clepet C."/>
            <person name="Menard M."/>
            <person name="Cruaud C."/>
            <person name="Quetier F."/>
            <person name="Scarpelli C."/>
            <person name="Schaechter V."/>
            <person name="Temple G."/>
            <person name="Caboche M."/>
            <person name="Weissenbach J."/>
            <person name="Salanoubat M."/>
        </authorList>
    </citation>
    <scope>NUCLEOTIDE SEQUENCE [LARGE SCALE MRNA] (ISOFORM 2)</scope>
    <source>
        <strain>cv. Columbia</strain>
    </source>
</reference>
<reference key="5">
    <citation type="journal article" date="2009" name="DNA Res.">
        <title>Analysis of multiple occurrences of alternative splicing events in Arabidopsis thaliana using novel sequenced full-length cDNAs.</title>
        <authorList>
            <person name="Iida K."/>
            <person name="Fukami-Kobayashi K."/>
            <person name="Toyoda A."/>
            <person name="Sakaki Y."/>
            <person name="Kobayashi M."/>
            <person name="Seki M."/>
            <person name="Shinozaki K."/>
        </authorList>
    </citation>
    <scope>NUCLEOTIDE SEQUENCE [LARGE SCALE MRNA] (ISOFORM 1)</scope>
    <source>
        <strain>cv. Columbia</strain>
        <tissue>Rosette leaf</tissue>
    </source>
</reference>
<reference key="6">
    <citation type="journal article" date="2003" name="Proc. Natl. Acad. Sci. U.S.A.">
        <title>The early stages of duplicate gene evolution.</title>
        <authorList>
            <person name="Moore R.C."/>
            <person name="Purugganan M.D."/>
        </authorList>
    </citation>
    <scope>NUCLEOTIDE SEQUENCE [GENOMIC DNA] OF 1-119 (ISOFORM 1)</scope>
    <scope>TISSUE SPECIFICITY</scope>
    <scope>DIFFERENTIAL EXPRESSION</scope>
    <source>
        <strain>cv. Co-1</strain>
        <strain>cv. Es-0</strain>
        <strain>cv. Ita-0</strain>
        <strain>cv. Kas-1</strain>
        <strain>cv. Kon</strain>
        <strain>cv. Landsberg erecta</strain>
        <strain>cv. Li-3</strain>
        <strain>cv. Lu-1</strain>
        <strain>cv. Mt-0</strain>
        <strain>cv. PHW-1</strain>
        <strain>cv. PHW-33</strain>
        <strain>cv. Pla-0</strain>
        <strain>cv. Pog-0</strain>
        <strain>cv. Tsu-1</strain>
        <strain>cv. Wassilewskija</strain>
    </source>
</reference>
<reference key="7">
    <citation type="journal article" date="2006" name="Amino Acids">
        <title>Histidine biosynthesis in plants.</title>
        <authorList>
            <person name="Stepansky A."/>
            <person name="Leustek T."/>
        </authorList>
    </citation>
    <scope>GENE FAMILY</scope>
    <scope>NOMENCLATURE</scope>
</reference>
<reference key="8">
    <citation type="journal article" date="2007" name="Plant Physiol.">
        <title>Genetic dissection of histidine biosynthesis in Arabidopsis.</title>
        <authorList>
            <person name="Muralla R."/>
            <person name="Sweeney C."/>
            <person name="Stepansky A."/>
            <person name="Leustek T."/>
            <person name="Meinke D."/>
        </authorList>
    </citation>
    <scope>GENE FAMILY</scope>
    <scope>NOMENCLATURE</scope>
</reference>
<reference key="9">
    <citation type="journal article" date="2012" name="Mol. Cell. Proteomics">
        <title>Comparative large-scale characterisation of plant vs. mammal proteins reveals similar and idiosyncratic N-alpha acetylation features.</title>
        <authorList>
            <person name="Bienvenut W.V."/>
            <person name="Sumpton D."/>
            <person name="Martinez A."/>
            <person name="Lilla S."/>
            <person name="Espagne C."/>
            <person name="Meinnel T."/>
            <person name="Giglione C."/>
        </authorList>
    </citation>
    <scope>ACETYLATION [LARGE SCALE ANALYSIS] AT ALA-41</scope>
    <scope>CLEAVAGE OF TRANSIT PEPTIDE [LARGE SCALE ANALYSIS] AFTER CYS-40</scope>
    <scope>IDENTIFICATION BY MASS SPECTROMETRY [LARGE SCALE ANALYSIS]</scope>
</reference>